<dbReference type="EMBL" id="CP001111">
    <property type="protein sequence ID" value="ACF53213.1"/>
    <property type="molecule type" value="Genomic_DNA"/>
</dbReference>
<dbReference type="RefSeq" id="WP_012512169.1">
    <property type="nucleotide sequence ID" value="NC_011071.1"/>
</dbReference>
<dbReference type="SMR" id="B4SJS2"/>
<dbReference type="STRING" id="391008.Smal_3514"/>
<dbReference type="KEGG" id="smt:Smal_3514"/>
<dbReference type="eggNOG" id="COG0712">
    <property type="taxonomic scope" value="Bacteria"/>
</dbReference>
<dbReference type="HOGENOM" id="CLU_085114_3_0_6"/>
<dbReference type="OrthoDB" id="9816221at2"/>
<dbReference type="Proteomes" id="UP000001867">
    <property type="component" value="Chromosome"/>
</dbReference>
<dbReference type="GO" id="GO:0005886">
    <property type="term" value="C:plasma membrane"/>
    <property type="evidence" value="ECO:0007669"/>
    <property type="project" value="UniProtKB-SubCell"/>
</dbReference>
<dbReference type="GO" id="GO:0045259">
    <property type="term" value="C:proton-transporting ATP synthase complex"/>
    <property type="evidence" value="ECO:0007669"/>
    <property type="project" value="UniProtKB-KW"/>
</dbReference>
<dbReference type="GO" id="GO:0046933">
    <property type="term" value="F:proton-transporting ATP synthase activity, rotational mechanism"/>
    <property type="evidence" value="ECO:0007669"/>
    <property type="project" value="UniProtKB-UniRule"/>
</dbReference>
<dbReference type="Gene3D" id="1.10.520.20">
    <property type="entry name" value="N-terminal domain of the delta subunit of the F1F0-ATP synthase"/>
    <property type="match status" value="1"/>
</dbReference>
<dbReference type="HAMAP" id="MF_01416">
    <property type="entry name" value="ATP_synth_delta_bact"/>
    <property type="match status" value="1"/>
</dbReference>
<dbReference type="InterPro" id="IPR026015">
    <property type="entry name" value="ATP_synth_OSCP/delta_N_sf"/>
</dbReference>
<dbReference type="InterPro" id="IPR000711">
    <property type="entry name" value="ATPase_OSCP/dsu"/>
</dbReference>
<dbReference type="NCBIfam" id="TIGR01145">
    <property type="entry name" value="ATP_synt_delta"/>
    <property type="match status" value="1"/>
</dbReference>
<dbReference type="NCBIfam" id="NF004402">
    <property type="entry name" value="PRK05758.2-2"/>
    <property type="match status" value="1"/>
</dbReference>
<dbReference type="PANTHER" id="PTHR11910">
    <property type="entry name" value="ATP SYNTHASE DELTA CHAIN"/>
    <property type="match status" value="1"/>
</dbReference>
<dbReference type="Pfam" id="PF00213">
    <property type="entry name" value="OSCP"/>
    <property type="match status" value="1"/>
</dbReference>
<dbReference type="PRINTS" id="PR00125">
    <property type="entry name" value="ATPASEDELTA"/>
</dbReference>
<dbReference type="SUPFAM" id="SSF47928">
    <property type="entry name" value="N-terminal domain of the delta subunit of the F1F0-ATP synthase"/>
    <property type="match status" value="1"/>
</dbReference>
<name>ATPD_STRM5</name>
<reference key="1">
    <citation type="submission" date="2008-06" db="EMBL/GenBank/DDBJ databases">
        <title>Complete sequence of Stenotrophomonas maltophilia R551-3.</title>
        <authorList>
            <consortium name="US DOE Joint Genome Institute"/>
            <person name="Lucas S."/>
            <person name="Copeland A."/>
            <person name="Lapidus A."/>
            <person name="Glavina del Rio T."/>
            <person name="Dalin E."/>
            <person name="Tice H."/>
            <person name="Pitluck S."/>
            <person name="Chain P."/>
            <person name="Malfatti S."/>
            <person name="Shin M."/>
            <person name="Vergez L."/>
            <person name="Lang D."/>
            <person name="Schmutz J."/>
            <person name="Larimer F."/>
            <person name="Land M."/>
            <person name="Hauser L."/>
            <person name="Kyrpides N."/>
            <person name="Mikhailova N."/>
            <person name="Taghavi S."/>
            <person name="Monchy S."/>
            <person name="Newman L."/>
            <person name="Vangronsveld J."/>
            <person name="van der Lelie D."/>
            <person name="Richardson P."/>
        </authorList>
    </citation>
    <scope>NUCLEOTIDE SEQUENCE [LARGE SCALE GENOMIC DNA]</scope>
    <source>
        <strain>R551-3</strain>
    </source>
</reference>
<organism>
    <name type="scientific">Stenotrophomonas maltophilia (strain R551-3)</name>
    <dbReference type="NCBI Taxonomy" id="391008"/>
    <lineage>
        <taxon>Bacteria</taxon>
        <taxon>Pseudomonadati</taxon>
        <taxon>Pseudomonadota</taxon>
        <taxon>Gammaproteobacteria</taxon>
        <taxon>Lysobacterales</taxon>
        <taxon>Lysobacteraceae</taxon>
        <taxon>Stenotrophomonas</taxon>
        <taxon>Stenotrophomonas maltophilia group</taxon>
    </lineage>
</organism>
<evidence type="ECO:0000255" key="1">
    <source>
        <dbReference type="HAMAP-Rule" id="MF_01416"/>
    </source>
</evidence>
<sequence length="175" mass="18314">MSQALTLARPYARAAFATARDEGAFAPWSDALAFSAHVAADPRVAALLANPELGRDDAVALLAPVTHGETYSRFLAILAESHRLPLLPEISGMFDALRADAEHVVKANVTSAAELSAGELDAIKTALRKRFNREVEVTTAVDASLIGGAVIDAGDVVIDGSLKGKLARLQTALAN</sequence>
<comment type="function">
    <text evidence="1">F(1)F(0) ATP synthase produces ATP from ADP in the presence of a proton or sodium gradient. F-type ATPases consist of two structural domains, F(1) containing the extramembraneous catalytic core and F(0) containing the membrane proton channel, linked together by a central stalk and a peripheral stalk. During catalysis, ATP synthesis in the catalytic domain of F(1) is coupled via a rotary mechanism of the central stalk subunits to proton translocation.</text>
</comment>
<comment type="function">
    <text evidence="1">This protein is part of the stalk that links CF(0) to CF(1). It either transmits conformational changes from CF(0) to CF(1) or is implicated in proton conduction.</text>
</comment>
<comment type="subunit">
    <text evidence="1">F-type ATPases have 2 components, F(1) - the catalytic core - and F(0) - the membrane proton channel. F(1) has five subunits: alpha(3), beta(3), gamma(1), delta(1), epsilon(1). F(0) has three main subunits: a(1), b(2) and c(10-14). The alpha and beta chains form an alternating ring which encloses part of the gamma chain. F(1) is attached to F(0) by a central stalk formed by the gamma and epsilon chains, while a peripheral stalk is formed by the delta and b chains.</text>
</comment>
<comment type="subcellular location">
    <subcellularLocation>
        <location evidence="1">Cell inner membrane</location>
        <topology evidence="1">Peripheral membrane protein</topology>
    </subcellularLocation>
</comment>
<comment type="similarity">
    <text evidence="1">Belongs to the ATPase delta chain family.</text>
</comment>
<gene>
    <name evidence="1" type="primary">atpH</name>
    <name type="ordered locus">Smal_3514</name>
</gene>
<proteinExistence type="inferred from homology"/>
<accession>B4SJS2</accession>
<feature type="chain" id="PRO_1000184810" description="ATP synthase subunit delta">
    <location>
        <begin position="1"/>
        <end position="175"/>
    </location>
</feature>
<protein>
    <recommendedName>
        <fullName evidence="1">ATP synthase subunit delta</fullName>
    </recommendedName>
    <alternativeName>
        <fullName evidence="1">ATP synthase F(1) sector subunit delta</fullName>
    </alternativeName>
    <alternativeName>
        <fullName evidence="1">F-type ATPase subunit delta</fullName>
        <shortName evidence="1">F-ATPase subunit delta</shortName>
    </alternativeName>
</protein>
<keyword id="KW-0066">ATP synthesis</keyword>
<keyword id="KW-0997">Cell inner membrane</keyword>
<keyword id="KW-1003">Cell membrane</keyword>
<keyword id="KW-0139">CF(1)</keyword>
<keyword id="KW-0375">Hydrogen ion transport</keyword>
<keyword id="KW-0406">Ion transport</keyword>
<keyword id="KW-0472">Membrane</keyword>
<keyword id="KW-0813">Transport</keyword>